<feature type="chain" id="PRO_1000082487" description="Chaperonin GroEL">
    <location>
        <begin position="1"/>
        <end position="548"/>
    </location>
</feature>
<feature type="binding site" evidence="1">
    <location>
        <begin position="30"/>
        <end position="33"/>
    </location>
    <ligand>
        <name>ATP</name>
        <dbReference type="ChEBI" id="CHEBI:30616"/>
    </ligand>
</feature>
<feature type="binding site" evidence="1">
    <location>
        <position position="51"/>
    </location>
    <ligand>
        <name>ATP</name>
        <dbReference type="ChEBI" id="CHEBI:30616"/>
    </ligand>
</feature>
<feature type="binding site" evidence="1">
    <location>
        <begin position="87"/>
        <end position="91"/>
    </location>
    <ligand>
        <name>ATP</name>
        <dbReference type="ChEBI" id="CHEBI:30616"/>
    </ligand>
</feature>
<feature type="binding site" evidence="1">
    <location>
        <position position="415"/>
    </location>
    <ligand>
        <name>ATP</name>
        <dbReference type="ChEBI" id="CHEBI:30616"/>
    </ligand>
</feature>
<feature type="binding site" evidence="1">
    <location>
        <begin position="479"/>
        <end position="481"/>
    </location>
    <ligand>
        <name>ATP</name>
        <dbReference type="ChEBI" id="CHEBI:30616"/>
    </ligand>
</feature>
<feature type="binding site" evidence="1">
    <location>
        <position position="495"/>
    </location>
    <ligand>
        <name>ATP</name>
        <dbReference type="ChEBI" id="CHEBI:30616"/>
    </ligand>
</feature>
<organism>
    <name type="scientific">Salmonella paratyphi B (strain ATCC BAA-1250 / SPB7)</name>
    <dbReference type="NCBI Taxonomy" id="1016998"/>
    <lineage>
        <taxon>Bacteria</taxon>
        <taxon>Pseudomonadati</taxon>
        <taxon>Pseudomonadota</taxon>
        <taxon>Gammaproteobacteria</taxon>
        <taxon>Enterobacterales</taxon>
        <taxon>Enterobacteriaceae</taxon>
        <taxon>Salmonella</taxon>
    </lineage>
</organism>
<proteinExistence type="inferred from homology"/>
<accession>A9N3Z7</accession>
<protein>
    <recommendedName>
        <fullName evidence="1">Chaperonin GroEL</fullName>
        <ecNumber evidence="1">5.6.1.7</ecNumber>
    </recommendedName>
    <alternativeName>
        <fullName evidence="1">60 kDa chaperonin</fullName>
    </alternativeName>
    <alternativeName>
        <fullName evidence="1">Chaperonin-60</fullName>
        <shortName evidence="1">Cpn60</shortName>
    </alternativeName>
</protein>
<evidence type="ECO:0000255" key="1">
    <source>
        <dbReference type="HAMAP-Rule" id="MF_00600"/>
    </source>
</evidence>
<gene>
    <name evidence="1" type="primary">groEL</name>
    <name evidence="1" type="synonym">groL</name>
    <name type="ordered locus">SPAB_05459</name>
</gene>
<keyword id="KW-0067">ATP-binding</keyword>
<keyword id="KW-0143">Chaperone</keyword>
<keyword id="KW-0963">Cytoplasm</keyword>
<keyword id="KW-0413">Isomerase</keyword>
<keyword id="KW-0547">Nucleotide-binding</keyword>
<name>CH60_SALPB</name>
<comment type="function">
    <text evidence="1">Together with its co-chaperonin GroES, plays an essential role in assisting protein folding. The GroEL-GroES system forms a nano-cage that allows encapsulation of the non-native substrate proteins and provides a physical environment optimized to promote and accelerate protein folding.</text>
</comment>
<comment type="catalytic activity">
    <reaction evidence="1">
        <text>ATP + H2O + a folded polypeptide = ADP + phosphate + an unfolded polypeptide.</text>
        <dbReference type="EC" id="5.6.1.7"/>
    </reaction>
</comment>
<comment type="subunit">
    <text evidence="1">Forms a cylinder of 14 subunits composed of two heptameric rings stacked back-to-back. Interacts with the co-chaperonin GroES.</text>
</comment>
<comment type="subcellular location">
    <subcellularLocation>
        <location evidence="1">Cytoplasm</location>
    </subcellularLocation>
</comment>
<comment type="similarity">
    <text evidence="1">Belongs to the chaperonin (HSP60) family.</text>
</comment>
<dbReference type="EC" id="5.6.1.7" evidence="1"/>
<dbReference type="EMBL" id="CP000886">
    <property type="protein sequence ID" value="ABX70731.1"/>
    <property type="molecule type" value="Genomic_DNA"/>
</dbReference>
<dbReference type="RefSeq" id="WP_000729126.1">
    <property type="nucleotide sequence ID" value="NC_010102.1"/>
</dbReference>
<dbReference type="SMR" id="A9N3Z7"/>
<dbReference type="KEGG" id="spq:SPAB_05459"/>
<dbReference type="PATRIC" id="fig|1016998.12.peg.5117"/>
<dbReference type="HOGENOM" id="CLU_016503_3_0_6"/>
<dbReference type="BioCyc" id="SENT1016998:SPAB_RS22260-MONOMER"/>
<dbReference type="Proteomes" id="UP000008556">
    <property type="component" value="Chromosome"/>
</dbReference>
<dbReference type="GO" id="GO:0005737">
    <property type="term" value="C:cytoplasm"/>
    <property type="evidence" value="ECO:0007669"/>
    <property type="project" value="UniProtKB-SubCell"/>
</dbReference>
<dbReference type="GO" id="GO:0005524">
    <property type="term" value="F:ATP binding"/>
    <property type="evidence" value="ECO:0007669"/>
    <property type="project" value="UniProtKB-UniRule"/>
</dbReference>
<dbReference type="GO" id="GO:0140662">
    <property type="term" value="F:ATP-dependent protein folding chaperone"/>
    <property type="evidence" value="ECO:0007669"/>
    <property type="project" value="InterPro"/>
</dbReference>
<dbReference type="GO" id="GO:0016853">
    <property type="term" value="F:isomerase activity"/>
    <property type="evidence" value="ECO:0007669"/>
    <property type="project" value="UniProtKB-KW"/>
</dbReference>
<dbReference type="GO" id="GO:0051082">
    <property type="term" value="F:unfolded protein binding"/>
    <property type="evidence" value="ECO:0007669"/>
    <property type="project" value="UniProtKB-UniRule"/>
</dbReference>
<dbReference type="GO" id="GO:0042026">
    <property type="term" value="P:protein refolding"/>
    <property type="evidence" value="ECO:0007669"/>
    <property type="project" value="UniProtKB-UniRule"/>
</dbReference>
<dbReference type="CDD" id="cd03344">
    <property type="entry name" value="GroEL"/>
    <property type="match status" value="1"/>
</dbReference>
<dbReference type="FunFam" id="1.10.560.10:FF:000001">
    <property type="entry name" value="60 kDa chaperonin"/>
    <property type="match status" value="1"/>
</dbReference>
<dbReference type="FunFam" id="3.50.7.10:FF:000001">
    <property type="entry name" value="60 kDa chaperonin"/>
    <property type="match status" value="1"/>
</dbReference>
<dbReference type="Gene3D" id="3.50.7.10">
    <property type="entry name" value="GroEL"/>
    <property type="match status" value="1"/>
</dbReference>
<dbReference type="Gene3D" id="1.10.560.10">
    <property type="entry name" value="GroEL-like equatorial domain"/>
    <property type="match status" value="1"/>
</dbReference>
<dbReference type="Gene3D" id="3.30.260.10">
    <property type="entry name" value="TCP-1-like chaperonin intermediate domain"/>
    <property type="match status" value="1"/>
</dbReference>
<dbReference type="HAMAP" id="MF_00600">
    <property type="entry name" value="CH60"/>
    <property type="match status" value="1"/>
</dbReference>
<dbReference type="InterPro" id="IPR018370">
    <property type="entry name" value="Chaperonin_Cpn60_CS"/>
</dbReference>
<dbReference type="InterPro" id="IPR001844">
    <property type="entry name" value="Cpn60/GroEL"/>
</dbReference>
<dbReference type="InterPro" id="IPR002423">
    <property type="entry name" value="Cpn60/GroEL/TCP-1"/>
</dbReference>
<dbReference type="InterPro" id="IPR027409">
    <property type="entry name" value="GroEL-like_apical_dom_sf"/>
</dbReference>
<dbReference type="InterPro" id="IPR027413">
    <property type="entry name" value="GROEL-like_equatorial_sf"/>
</dbReference>
<dbReference type="InterPro" id="IPR027410">
    <property type="entry name" value="TCP-1-like_intermed_sf"/>
</dbReference>
<dbReference type="NCBIfam" id="TIGR02348">
    <property type="entry name" value="GroEL"/>
    <property type="match status" value="1"/>
</dbReference>
<dbReference type="NCBIfam" id="NF000592">
    <property type="entry name" value="PRK00013.1"/>
    <property type="match status" value="1"/>
</dbReference>
<dbReference type="NCBIfam" id="NF009487">
    <property type="entry name" value="PRK12849.1"/>
    <property type="match status" value="1"/>
</dbReference>
<dbReference type="NCBIfam" id="NF009488">
    <property type="entry name" value="PRK12850.1"/>
    <property type="match status" value="1"/>
</dbReference>
<dbReference type="NCBIfam" id="NF009489">
    <property type="entry name" value="PRK12851.1"/>
    <property type="match status" value="1"/>
</dbReference>
<dbReference type="PANTHER" id="PTHR45633">
    <property type="entry name" value="60 KDA HEAT SHOCK PROTEIN, MITOCHONDRIAL"/>
    <property type="match status" value="1"/>
</dbReference>
<dbReference type="Pfam" id="PF00118">
    <property type="entry name" value="Cpn60_TCP1"/>
    <property type="match status" value="1"/>
</dbReference>
<dbReference type="PRINTS" id="PR00298">
    <property type="entry name" value="CHAPERONIN60"/>
</dbReference>
<dbReference type="SUPFAM" id="SSF52029">
    <property type="entry name" value="GroEL apical domain-like"/>
    <property type="match status" value="1"/>
</dbReference>
<dbReference type="SUPFAM" id="SSF48592">
    <property type="entry name" value="GroEL equatorial domain-like"/>
    <property type="match status" value="1"/>
</dbReference>
<dbReference type="SUPFAM" id="SSF54849">
    <property type="entry name" value="GroEL-intermediate domain like"/>
    <property type="match status" value="1"/>
</dbReference>
<dbReference type="PROSITE" id="PS00296">
    <property type="entry name" value="CHAPERONINS_CPN60"/>
    <property type="match status" value="1"/>
</dbReference>
<reference key="1">
    <citation type="submission" date="2007-11" db="EMBL/GenBank/DDBJ databases">
        <authorList>
            <consortium name="The Salmonella enterica serovar Paratyphi B Genome Sequencing Project"/>
            <person name="McClelland M."/>
            <person name="Sanderson E.K."/>
            <person name="Porwollik S."/>
            <person name="Spieth J."/>
            <person name="Clifton W.S."/>
            <person name="Fulton R."/>
            <person name="Cordes M."/>
            <person name="Wollam A."/>
            <person name="Shah N."/>
            <person name="Pepin K."/>
            <person name="Bhonagiri V."/>
            <person name="Nash W."/>
            <person name="Johnson M."/>
            <person name="Thiruvilangam P."/>
            <person name="Wilson R."/>
        </authorList>
    </citation>
    <scope>NUCLEOTIDE SEQUENCE [LARGE SCALE GENOMIC DNA]</scope>
    <source>
        <strain>ATCC BAA-1250 / SPB7</strain>
    </source>
</reference>
<sequence>MAAKDVKFGNDARVKMLRGVNVLADAVKVTLGPKGRNVVLDKSFGAPTITKDGVSVAREIELEDKFENMGAQMVKEVASKANDAAGDGTTTATVLAQSIITEGLKAVAAGMNPMDLKRGIDKAVAAAVEELKALSVPCSDSKAIAQVGTISANSDETVGKLIAEAMDKVGKEGVITVEDGTGLQDELDVVEGMQFDRGYLSPYFINKPETGAVELESPFILLADKKISNIREMLPVLEAVAKAGKPLLIIAEDVEGEALATLVVNTMRGIVKVAAVKAPGFGDRRKAMLQDIATLTGGTVISEEIGMELEKATLEDLGQAKRVVINKDTTTIIDGVGEEAAIQGRVAQIRQQIEEATSDYDREKLQERVAKLAGGVAVIKVGAATEVEMKEKKARVEDALHATRAAVEEGVVAGGGVALIRVASKIADLKGQNEDQNVGIKVALRAMEAPLRQIVLNCGEEPSVVANTVKGGDGNYGYNAATEEYGNMIDMGILDPTKVTRSALQYAASVAGLMITTECMVTDLPKSDAPDLGAAGGMGGMGGMGGMM</sequence>